<proteinExistence type="inferred from homology"/>
<accession>A0A7R7ZLL0</accession>
<evidence type="ECO:0000250" key="1">
    <source>
        <dbReference type="UniProtKB" id="Q988B9"/>
    </source>
</evidence>
<evidence type="ECO:0000255" key="2"/>
<evidence type="ECO:0000269" key="3">
    <source>
    </source>
</evidence>
<evidence type="ECO:0000303" key="4">
    <source>
    </source>
</evidence>
<evidence type="ECO:0000305" key="5"/>
<evidence type="ECO:0000305" key="6">
    <source>
    </source>
</evidence>
<feature type="chain" id="PRO_0000459059" description="Atrochrysone carboxyl ACP thioesterase">
    <location>
        <begin position="1"/>
        <end position="308"/>
    </location>
</feature>
<feature type="active site" description="Proton donor/acceptor" evidence="2">
    <location>
        <position position="103"/>
    </location>
</feature>
<feature type="binding site" evidence="1">
    <location>
        <position position="99"/>
    </location>
    <ligand>
        <name>Zn(2+)</name>
        <dbReference type="ChEBI" id="CHEBI:29105"/>
        <label>1</label>
        <note>catalytic</note>
    </ligand>
</feature>
<feature type="binding site" evidence="1">
    <location>
        <position position="101"/>
    </location>
    <ligand>
        <name>Zn(2+)</name>
        <dbReference type="ChEBI" id="CHEBI:29105"/>
        <label>1</label>
        <note>catalytic</note>
    </ligand>
</feature>
<feature type="binding site" evidence="1">
    <location>
        <position position="103"/>
    </location>
    <ligand>
        <name>Zn(2+)</name>
        <dbReference type="ChEBI" id="CHEBI:29105"/>
        <label>2</label>
        <note>catalytic</note>
    </ligand>
</feature>
<feature type="binding site" evidence="1">
    <location>
        <position position="104"/>
    </location>
    <ligand>
        <name>Zn(2+)</name>
        <dbReference type="ChEBI" id="CHEBI:29105"/>
        <label>2</label>
        <note>catalytic</note>
    </ligand>
</feature>
<reference key="1">
    <citation type="journal article" date="2021" name="Microbiol. Resour. Announc.">
        <title>Chromosome-Level genome sequence of Aspergillus chevalieri M1, isolated from katsuobushi.</title>
        <authorList>
            <person name="Kadooka C."/>
            <person name="Mori K."/>
            <person name="Okutsu K."/>
            <person name="Yoshizaki Y."/>
            <person name="Takamine K."/>
            <person name="Tashiro K."/>
            <person name="Tamaki H."/>
            <person name="Futagami T."/>
        </authorList>
    </citation>
    <scope>NUCLEOTIDE SEQUENCE [LARGE SCALE GENOMIC DNA]</scope>
    <source>
        <strain>M1</strain>
    </source>
</reference>
<reference key="2">
    <citation type="journal article" date="2023" name="Appl. Microbiol. Biotechnol.">
        <title>Mining an O-methyltransferase for de novo biosynthesis of physcion in Aspergillus nidulans.</title>
        <authorList>
            <person name="Yao Y."/>
            <person name="Yang E."/>
            <person name="Pan Y."/>
            <person name="Shu X."/>
            <person name="Liu G."/>
        </authorList>
    </citation>
    <scope>FUNCTION</scope>
    <scope>PATHWAY</scope>
</reference>
<organism>
    <name type="scientific">Aspergillus chevalieri</name>
    <name type="common">Eurotium chevalieri</name>
    <dbReference type="NCBI Taxonomy" id="182096"/>
    <lineage>
        <taxon>Eukaryota</taxon>
        <taxon>Fungi</taxon>
        <taxon>Dikarya</taxon>
        <taxon>Ascomycota</taxon>
        <taxon>Pezizomycotina</taxon>
        <taxon>Eurotiomycetes</taxon>
        <taxon>Eurotiomycetidae</taxon>
        <taxon>Eurotiales</taxon>
        <taxon>Aspergillaceae</taxon>
        <taxon>Aspergillus</taxon>
        <taxon>Aspergillus subgen. Aspergillus</taxon>
    </lineage>
</organism>
<dbReference type="EC" id="3.1.2.-" evidence="6"/>
<dbReference type="EMBL" id="AP024417">
    <property type="protein sequence ID" value="BCR85521.1"/>
    <property type="molecule type" value="Genomic_DNA"/>
</dbReference>
<dbReference type="SMR" id="A0A7R7ZLL0"/>
<dbReference type="Proteomes" id="UP000637239">
    <property type="component" value="Chromosome 2"/>
</dbReference>
<dbReference type="GO" id="GO:0016787">
    <property type="term" value="F:hydrolase activity"/>
    <property type="evidence" value="ECO:0007669"/>
    <property type="project" value="UniProtKB-KW"/>
</dbReference>
<dbReference type="GO" id="GO:0046872">
    <property type="term" value="F:metal ion binding"/>
    <property type="evidence" value="ECO:0007669"/>
    <property type="project" value="UniProtKB-KW"/>
</dbReference>
<dbReference type="GO" id="GO:0044550">
    <property type="term" value="P:secondary metabolite biosynthetic process"/>
    <property type="evidence" value="ECO:0007669"/>
    <property type="project" value="TreeGrafter"/>
</dbReference>
<dbReference type="CDD" id="cd07722">
    <property type="entry name" value="LACTB2-like_MBL-fold"/>
    <property type="match status" value="1"/>
</dbReference>
<dbReference type="FunFam" id="3.60.15.10:FF:000041">
    <property type="entry name" value="Metallo-beta-lactamase domain protein"/>
    <property type="match status" value="1"/>
</dbReference>
<dbReference type="Gene3D" id="3.60.15.10">
    <property type="entry name" value="Ribonuclease Z/Hydroxyacylglutathione hydrolase-like"/>
    <property type="match status" value="1"/>
</dbReference>
<dbReference type="Gene3D" id="1.10.10.10">
    <property type="entry name" value="Winged helix-like DNA-binding domain superfamily/Winged helix DNA-binding domain"/>
    <property type="match status" value="1"/>
</dbReference>
<dbReference type="InterPro" id="IPR047921">
    <property type="entry name" value="LACTB2-like_MBL-fold"/>
</dbReference>
<dbReference type="InterPro" id="IPR001279">
    <property type="entry name" value="Metallo-B-lactamas"/>
</dbReference>
<dbReference type="InterPro" id="IPR036866">
    <property type="entry name" value="RibonucZ/Hydroxyglut_hydro"/>
</dbReference>
<dbReference type="InterPro" id="IPR050662">
    <property type="entry name" value="Sec-metab_biosynth-thioest"/>
</dbReference>
<dbReference type="InterPro" id="IPR036388">
    <property type="entry name" value="WH-like_DNA-bd_sf"/>
</dbReference>
<dbReference type="PANTHER" id="PTHR23131">
    <property type="entry name" value="ENDORIBONUCLEASE LACTB2"/>
    <property type="match status" value="1"/>
</dbReference>
<dbReference type="PANTHER" id="PTHR23131:SF0">
    <property type="entry name" value="ENDORIBONUCLEASE LACTB2"/>
    <property type="match status" value="1"/>
</dbReference>
<dbReference type="Pfam" id="PF00753">
    <property type="entry name" value="Lactamase_B"/>
    <property type="match status" value="1"/>
</dbReference>
<dbReference type="SMART" id="SM00849">
    <property type="entry name" value="Lactamase_B"/>
    <property type="match status" value="1"/>
</dbReference>
<dbReference type="SUPFAM" id="SSF56281">
    <property type="entry name" value="Metallo-hydrolase/oxidoreductase"/>
    <property type="match status" value="1"/>
</dbReference>
<name>ACTE_ASPCH</name>
<protein>
    <recommendedName>
        <fullName evidence="4">Atrochrysone carboxyl ACP thioesterase</fullName>
        <shortName evidence="4">AcTE</shortName>
        <ecNumber evidence="6">3.1.2.-</ecNumber>
    </recommendedName>
    <alternativeName>
        <fullName evidence="4">Physcion biosynthesis cluster thioesterase</fullName>
    </alternativeName>
</protein>
<keyword id="KW-0378">Hydrolase</keyword>
<keyword id="KW-0479">Metal-binding</keyword>
<keyword id="KW-1185">Reference proteome</keyword>
<keyword id="KW-0862">Zinc</keyword>
<gene>
    <name evidence="4" type="primary">AcTE</name>
    <name type="ORF">ACHE_20979A</name>
</gene>
<comment type="function">
    <text evidence="3 6">Atrochrysone carboxyl ACP thioesterase; part of the gene cluster that mediates the biosynthesis of physcion, a natural anthraquinone fungicide that can prevent plant fungal infections (PubMed:36648527). The pathway begins with the polyketide synthase AcPKS that condenses 8 malonyl-CoA units to synthesize atrochrysone thioester which is released from the synthase by the atrochrysone carboxyl ACP thioesterase AcTE that breaks the thioester bond and leads to free atrochrysone carboxylic acid (Probable). Spontaneous decarboxylation of atrochrysone carboxylic acid leads to the formation of atrochrysone. Then, atrochrysone undergoes spontaneous dehydration and oxidation, giving the products emodin anthrone and emodin. The O-methyltransferase AcOMT then methylates the C-6 hydroxyl of emodin to form physcion (Probable).</text>
</comment>
<comment type="catalytic activity">
    <reaction evidence="6">
        <text>atrochrysone carboxyl-[ACP] + H2O = atrochrysone carboxylate + holo-[ACP] + H(+)</text>
        <dbReference type="Rhea" id="RHEA:64236"/>
        <dbReference type="Rhea" id="RHEA-COMP:9685"/>
        <dbReference type="Rhea" id="RHEA-COMP:16552"/>
        <dbReference type="ChEBI" id="CHEBI:15377"/>
        <dbReference type="ChEBI" id="CHEBI:15378"/>
        <dbReference type="ChEBI" id="CHEBI:64479"/>
        <dbReference type="ChEBI" id="CHEBI:149712"/>
        <dbReference type="ChEBI" id="CHEBI:149713"/>
    </reaction>
    <physiologicalReaction direction="left-to-right" evidence="6">
        <dbReference type="Rhea" id="RHEA:64237"/>
    </physiologicalReaction>
</comment>
<comment type="cofactor">
    <cofactor evidence="1">
        <name>Zn(2+)</name>
        <dbReference type="ChEBI" id="CHEBI:29105"/>
    </cofactor>
    <text evidence="1">Binds 2 Zn(2+) ions per subunit.</text>
</comment>
<comment type="pathway">
    <text evidence="6">Secondary metabolite biosynthesis.</text>
</comment>
<comment type="similarity">
    <text evidence="5">Belongs to the metallo-beta-lactamase superfamily.</text>
</comment>
<sequence length="308" mass="34127">MSRKINDTFDACFWEEYLESQGSRLPPLPDVQRITPRVVRVLAGNPGGFQLQGTNTYLVGSGREKILIDTGQGLPVWIDHIAQVVAENDLKIVAALITHWHGDHTGGVPDLLVHFPHLKSAIYKNQPDRGQQDILDGQVFQVEGATIRALHTPGHAVDHMCFVLEEEQAIFTGDNVLGHGFTVVEDLGAYTNSLGIMNDQGCQIGYPAHGVVITDMPAKMAEYRDQRLRRERQVISALRESRQKNAGRGSITVQEVVQSVHGTVPEDVSKKALEPFMQEVLLKLAGDRKVAFELQGGVKRWFIVGNRV</sequence>